<evidence type="ECO:0000250" key="1"/>
<evidence type="ECO:0000256" key="2">
    <source>
        <dbReference type="SAM" id="MobiDB-lite"/>
    </source>
</evidence>
<evidence type="ECO:0000305" key="3"/>
<dbReference type="EMBL" id="BC076362">
    <property type="protein sequence ID" value="AAH76362.1"/>
    <property type="molecule type" value="mRNA"/>
</dbReference>
<dbReference type="RefSeq" id="NP_001002534.1">
    <property type="nucleotide sequence ID" value="NM_001002534.1"/>
</dbReference>
<dbReference type="SMR" id="Q6DGI3"/>
<dbReference type="FunCoup" id="Q6DGI3">
    <property type="interactions" value="2079"/>
</dbReference>
<dbReference type="STRING" id="7955.ENSDARP00000065207"/>
<dbReference type="PaxDb" id="7955-ENSDARP00000065207"/>
<dbReference type="Ensembl" id="ENSDART00000065208">
    <property type="protein sequence ID" value="ENSDARP00000065207"/>
    <property type="gene ID" value="ENSDARG00000044402"/>
</dbReference>
<dbReference type="GeneID" id="436807"/>
<dbReference type="KEGG" id="dre:436807"/>
<dbReference type="AGR" id="ZFIN:ZDB-GENE-040718-267"/>
<dbReference type="CTD" id="51491"/>
<dbReference type="ZFIN" id="ZDB-GENE-040718-267">
    <property type="gene designation" value="nop16"/>
</dbReference>
<dbReference type="eggNOG" id="KOG4706">
    <property type="taxonomic scope" value="Eukaryota"/>
</dbReference>
<dbReference type="HOGENOM" id="CLU_115103_0_0_1"/>
<dbReference type="InParanoid" id="Q6DGI3"/>
<dbReference type="OMA" id="IDYVKHM"/>
<dbReference type="OrthoDB" id="285729at2759"/>
<dbReference type="PhylomeDB" id="Q6DGI3"/>
<dbReference type="TreeFam" id="TF323541"/>
<dbReference type="PRO" id="PR:Q6DGI3"/>
<dbReference type="Proteomes" id="UP000000437">
    <property type="component" value="Chromosome 21"/>
</dbReference>
<dbReference type="Bgee" id="ENSDARG00000044402">
    <property type="expression patterns" value="Expressed in tail bud paraxial mesoderm and 34 other cell types or tissues"/>
</dbReference>
<dbReference type="GO" id="GO:0005730">
    <property type="term" value="C:nucleolus"/>
    <property type="evidence" value="ECO:0000318"/>
    <property type="project" value="GO_Central"/>
</dbReference>
<dbReference type="GO" id="GO:0042273">
    <property type="term" value="P:ribosomal large subunit biogenesis"/>
    <property type="evidence" value="ECO:0000318"/>
    <property type="project" value="GO_Central"/>
</dbReference>
<dbReference type="InterPro" id="IPR019002">
    <property type="entry name" value="Ribosome_biogenesis_Nop16"/>
</dbReference>
<dbReference type="PANTHER" id="PTHR13243">
    <property type="entry name" value="HSPC111 PROTEIN-RELATED"/>
    <property type="match status" value="1"/>
</dbReference>
<dbReference type="PANTHER" id="PTHR13243:SF1">
    <property type="entry name" value="NUCLEOLAR PROTEIN 16"/>
    <property type="match status" value="1"/>
</dbReference>
<dbReference type="Pfam" id="PF09420">
    <property type="entry name" value="Nop16"/>
    <property type="match status" value="2"/>
</dbReference>
<reference key="1">
    <citation type="submission" date="2004-07" db="EMBL/GenBank/DDBJ databases">
        <authorList>
            <consortium name="NIH - Zebrafish Gene Collection (ZGC) project"/>
        </authorList>
    </citation>
    <scope>NUCLEOTIDE SEQUENCE [LARGE SCALE MRNA]</scope>
    <source>
        <tissue>Brain</tissue>
    </source>
</reference>
<accession>Q6DGI3</accession>
<comment type="subcellular location">
    <subcellularLocation>
        <location evidence="1">Nucleus</location>
        <location evidence="1">Nucleolus</location>
    </subcellularLocation>
</comment>
<comment type="similarity">
    <text evidence="3">Belongs to the NOP16 family.</text>
</comment>
<sequence length="171" mass="20228">MGKIKKSRKRNTFNYNKNKKKLKKKLRRKEKPHIECPQIRKAWDEHKTVKQNLQDMGLAPGTKGMLPIKPKKNTKVEPMETNVLKPYVIEEMEAEASVRGNDRTTCSTDMIEYVQHMVKEHNEDYKAMARDEKNYYQDTPKQIKRKVELYKRCHPEQYAAFIASLQSQKST</sequence>
<name>NOP16_DANRE</name>
<gene>
    <name type="primary">nop16</name>
    <name type="ORF">zgc:92910</name>
</gene>
<organism>
    <name type="scientific">Danio rerio</name>
    <name type="common">Zebrafish</name>
    <name type="synonym">Brachydanio rerio</name>
    <dbReference type="NCBI Taxonomy" id="7955"/>
    <lineage>
        <taxon>Eukaryota</taxon>
        <taxon>Metazoa</taxon>
        <taxon>Chordata</taxon>
        <taxon>Craniata</taxon>
        <taxon>Vertebrata</taxon>
        <taxon>Euteleostomi</taxon>
        <taxon>Actinopterygii</taxon>
        <taxon>Neopterygii</taxon>
        <taxon>Teleostei</taxon>
        <taxon>Ostariophysi</taxon>
        <taxon>Cypriniformes</taxon>
        <taxon>Danionidae</taxon>
        <taxon>Danioninae</taxon>
        <taxon>Danio</taxon>
    </lineage>
</organism>
<feature type="chain" id="PRO_0000250160" description="Nucleolar protein 16">
    <location>
        <begin position="1"/>
        <end position="171"/>
    </location>
</feature>
<feature type="region of interest" description="Disordered" evidence="2">
    <location>
        <begin position="1"/>
        <end position="34"/>
    </location>
</feature>
<feature type="region of interest" description="Disordered" evidence="2">
    <location>
        <begin position="56"/>
        <end position="79"/>
    </location>
</feature>
<feature type="compositionally biased region" description="Basic residues" evidence="2">
    <location>
        <begin position="1"/>
        <end position="31"/>
    </location>
</feature>
<keyword id="KW-0539">Nucleus</keyword>
<keyword id="KW-1185">Reference proteome</keyword>
<proteinExistence type="evidence at transcript level"/>
<protein>
    <recommendedName>
        <fullName>Nucleolar protein 16</fullName>
    </recommendedName>
</protein>